<protein>
    <recommendedName>
        <fullName evidence="1">Threonine--tRNA ligase</fullName>
        <ecNumber evidence="1">6.1.1.3</ecNumber>
    </recommendedName>
    <alternativeName>
        <fullName evidence="1">Threonyl-tRNA synthetase</fullName>
        <shortName evidence="1">ThrRS</shortName>
    </alternativeName>
</protein>
<feature type="chain" id="PRO_0000101057" description="Threonine--tRNA ligase">
    <location>
        <begin position="1"/>
        <end position="658"/>
    </location>
</feature>
<feature type="domain" description="TGS" evidence="2">
    <location>
        <begin position="1"/>
        <end position="61"/>
    </location>
</feature>
<feature type="region of interest" description="Catalytic" evidence="1">
    <location>
        <begin position="259"/>
        <end position="554"/>
    </location>
</feature>
<feature type="binding site" evidence="1">
    <location>
        <position position="353"/>
    </location>
    <ligand>
        <name>Zn(2+)</name>
        <dbReference type="ChEBI" id="CHEBI:29105"/>
    </ligand>
</feature>
<feature type="binding site" evidence="1">
    <location>
        <position position="404"/>
    </location>
    <ligand>
        <name>Zn(2+)</name>
        <dbReference type="ChEBI" id="CHEBI:29105"/>
    </ligand>
</feature>
<feature type="binding site" evidence="1">
    <location>
        <position position="531"/>
    </location>
    <ligand>
        <name>Zn(2+)</name>
        <dbReference type="ChEBI" id="CHEBI:29105"/>
    </ligand>
</feature>
<comment type="function">
    <text evidence="1">Catalyzes the attachment of threonine to tRNA(Thr) in a two-step reaction: L-threonine is first activated by ATP to form Thr-AMP and then transferred to the acceptor end of tRNA(Thr). Also edits incorrectly charged L-seryl-tRNA(Thr).</text>
</comment>
<comment type="catalytic activity">
    <reaction evidence="1">
        <text>tRNA(Thr) + L-threonine + ATP = L-threonyl-tRNA(Thr) + AMP + diphosphate + H(+)</text>
        <dbReference type="Rhea" id="RHEA:24624"/>
        <dbReference type="Rhea" id="RHEA-COMP:9670"/>
        <dbReference type="Rhea" id="RHEA-COMP:9704"/>
        <dbReference type="ChEBI" id="CHEBI:15378"/>
        <dbReference type="ChEBI" id="CHEBI:30616"/>
        <dbReference type="ChEBI" id="CHEBI:33019"/>
        <dbReference type="ChEBI" id="CHEBI:57926"/>
        <dbReference type="ChEBI" id="CHEBI:78442"/>
        <dbReference type="ChEBI" id="CHEBI:78534"/>
        <dbReference type="ChEBI" id="CHEBI:456215"/>
        <dbReference type="EC" id="6.1.1.3"/>
    </reaction>
</comment>
<comment type="cofactor">
    <cofactor evidence="1">
        <name>Zn(2+)</name>
        <dbReference type="ChEBI" id="CHEBI:29105"/>
    </cofactor>
    <text evidence="1">Binds 1 zinc ion per subunit.</text>
</comment>
<comment type="subunit">
    <text evidence="1">Homodimer.</text>
</comment>
<comment type="subcellular location">
    <subcellularLocation>
        <location evidence="1">Cytoplasm</location>
    </subcellularLocation>
</comment>
<comment type="similarity">
    <text evidence="1">Belongs to the class-II aminoacyl-tRNA synthetase family.</text>
</comment>
<dbReference type="EC" id="6.1.1.3" evidence="1"/>
<dbReference type="EMBL" id="BA000030">
    <property type="protein sequence ID" value="BAC74533.1"/>
    <property type="molecule type" value="Genomic_DNA"/>
</dbReference>
<dbReference type="RefSeq" id="WP_010988220.1">
    <property type="nucleotide sequence ID" value="NC_003155.5"/>
</dbReference>
<dbReference type="SMR" id="Q827U8"/>
<dbReference type="GeneID" id="41543897"/>
<dbReference type="KEGG" id="sma:SAVERM_6822"/>
<dbReference type="eggNOG" id="COG0441">
    <property type="taxonomic scope" value="Bacteria"/>
</dbReference>
<dbReference type="HOGENOM" id="CLU_008554_0_1_11"/>
<dbReference type="Proteomes" id="UP000000428">
    <property type="component" value="Chromosome"/>
</dbReference>
<dbReference type="GO" id="GO:0005737">
    <property type="term" value="C:cytoplasm"/>
    <property type="evidence" value="ECO:0007669"/>
    <property type="project" value="UniProtKB-SubCell"/>
</dbReference>
<dbReference type="GO" id="GO:0005524">
    <property type="term" value="F:ATP binding"/>
    <property type="evidence" value="ECO:0007669"/>
    <property type="project" value="UniProtKB-UniRule"/>
</dbReference>
<dbReference type="GO" id="GO:0046872">
    <property type="term" value="F:metal ion binding"/>
    <property type="evidence" value="ECO:0007669"/>
    <property type="project" value="UniProtKB-KW"/>
</dbReference>
<dbReference type="GO" id="GO:0004829">
    <property type="term" value="F:threonine-tRNA ligase activity"/>
    <property type="evidence" value="ECO:0007669"/>
    <property type="project" value="UniProtKB-UniRule"/>
</dbReference>
<dbReference type="GO" id="GO:0000049">
    <property type="term" value="F:tRNA binding"/>
    <property type="evidence" value="ECO:0007669"/>
    <property type="project" value="UniProtKB-KW"/>
</dbReference>
<dbReference type="GO" id="GO:0006435">
    <property type="term" value="P:threonyl-tRNA aminoacylation"/>
    <property type="evidence" value="ECO:0007669"/>
    <property type="project" value="UniProtKB-UniRule"/>
</dbReference>
<dbReference type="CDD" id="cd01667">
    <property type="entry name" value="TGS_ThrRS"/>
    <property type="match status" value="1"/>
</dbReference>
<dbReference type="CDD" id="cd00860">
    <property type="entry name" value="ThrRS_anticodon"/>
    <property type="match status" value="1"/>
</dbReference>
<dbReference type="CDD" id="cd00771">
    <property type="entry name" value="ThrRS_core"/>
    <property type="match status" value="1"/>
</dbReference>
<dbReference type="FunFam" id="3.30.54.20:FF:000003">
    <property type="entry name" value="Threonine--tRNA ligase"/>
    <property type="match status" value="1"/>
</dbReference>
<dbReference type="FunFam" id="3.30.930.10:FF:000019">
    <property type="entry name" value="Threonine--tRNA ligase"/>
    <property type="match status" value="1"/>
</dbReference>
<dbReference type="FunFam" id="3.40.50.800:FF:000001">
    <property type="entry name" value="Threonine--tRNA ligase"/>
    <property type="match status" value="1"/>
</dbReference>
<dbReference type="FunFam" id="3.30.980.10:FF:000005">
    <property type="entry name" value="Threonyl-tRNA synthetase, mitochondrial"/>
    <property type="match status" value="1"/>
</dbReference>
<dbReference type="Gene3D" id="3.30.54.20">
    <property type="match status" value="1"/>
</dbReference>
<dbReference type="Gene3D" id="3.40.50.800">
    <property type="entry name" value="Anticodon-binding domain"/>
    <property type="match status" value="1"/>
</dbReference>
<dbReference type="Gene3D" id="3.30.930.10">
    <property type="entry name" value="Bira Bifunctional Protein, Domain 2"/>
    <property type="match status" value="1"/>
</dbReference>
<dbReference type="Gene3D" id="3.30.980.10">
    <property type="entry name" value="Threonyl-trna Synthetase, Chain A, domain 2"/>
    <property type="match status" value="1"/>
</dbReference>
<dbReference type="HAMAP" id="MF_00184">
    <property type="entry name" value="Thr_tRNA_synth"/>
    <property type="match status" value="1"/>
</dbReference>
<dbReference type="InterPro" id="IPR002314">
    <property type="entry name" value="aa-tRNA-synt_IIb"/>
</dbReference>
<dbReference type="InterPro" id="IPR006195">
    <property type="entry name" value="aa-tRNA-synth_II"/>
</dbReference>
<dbReference type="InterPro" id="IPR045864">
    <property type="entry name" value="aa-tRNA-synth_II/BPL/LPL"/>
</dbReference>
<dbReference type="InterPro" id="IPR004154">
    <property type="entry name" value="Anticodon-bd"/>
</dbReference>
<dbReference type="InterPro" id="IPR036621">
    <property type="entry name" value="Anticodon-bd_dom_sf"/>
</dbReference>
<dbReference type="InterPro" id="IPR004095">
    <property type="entry name" value="TGS"/>
</dbReference>
<dbReference type="InterPro" id="IPR002320">
    <property type="entry name" value="Thr-tRNA-ligase_IIa"/>
</dbReference>
<dbReference type="InterPro" id="IPR018163">
    <property type="entry name" value="Thr/Ala-tRNA-synth_IIc_edit"/>
</dbReference>
<dbReference type="InterPro" id="IPR047246">
    <property type="entry name" value="ThrRS_anticodon"/>
</dbReference>
<dbReference type="InterPro" id="IPR033728">
    <property type="entry name" value="ThrRS_core"/>
</dbReference>
<dbReference type="InterPro" id="IPR012947">
    <property type="entry name" value="tRNA_SAD"/>
</dbReference>
<dbReference type="NCBIfam" id="TIGR00418">
    <property type="entry name" value="thrS"/>
    <property type="match status" value="1"/>
</dbReference>
<dbReference type="PANTHER" id="PTHR11451:SF44">
    <property type="entry name" value="THREONINE--TRNA LIGASE, CHLOROPLASTIC_MITOCHONDRIAL 2"/>
    <property type="match status" value="1"/>
</dbReference>
<dbReference type="PANTHER" id="PTHR11451">
    <property type="entry name" value="THREONINE-TRNA LIGASE"/>
    <property type="match status" value="1"/>
</dbReference>
<dbReference type="Pfam" id="PF03129">
    <property type="entry name" value="HGTP_anticodon"/>
    <property type="match status" value="1"/>
</dbReference>
<dbReference type="Pfam" id="PF00587">
    <property type="entry name" value="tRNA-synt_2b"/>
    <property type="match status" value="1"/>
</dbReference>
<dbReference type="Pfam" id="PF07973">
    <property type="entry name" value="tRNA_SAD"/>
    <property type="match status" value="1"/>
</dbReference>
<dbReference type="PRINTS" id="PR01047">
    <property type="entry name" value="TRNASYNTHTHR"/>
</dbReference>
<dbReference type="SMART" id="SM00863">
    <property type="entry name" value="tRNA_SAD"/>
    <property type="match status" value="1"/>
</dbReference>
<dbReference type="SUPFAM" id="SSF52954">
    <property type="entry name" value="Class II aaRS ABD-related"/>
    <property type="match status" value="1"/>
</dbReference>
<dbReference type="SUPFAM" id="SSF55681">
    <property type="entry name" value="Class II aaRS and biotin synthetases"/>
    <property type="match status" value="1"/>
</dbReference>
<dbReference type="SUPFAM" id="SSF55186">
    <property type="entry name" value="ThrRS/AlaRS common domain"/>
    <property type="match status" value="1"/>
</dbReference>
<dbReference type="PROSITE" id="PS50862">
    <property type="entry name" value="AA_TRNA_LIGASE_II"/>
    <property type="match status" value="1"/>
</dbReference>
<dbReference type="PROSITE" id="PS51880">
    <property type="entry name" value="TGS"/>
    <property type="match status" value="1"/>
</dbReference>
<organism>
    <name type="scientific">Streptomyces avermitilis (strain ATCC 31267 / DSM 46492 / JCM 5070 / NBRC 14893 / NCIMB 12804 / NRRL 8165 / MA-4680)</name>
    <dbReference type="NCBI Taxonomy" id="227882"/>
    <lineage>
        <taxon>Bacteria</taxon>
        <taxon>Bacillati</taxon>
        <taxon>Actinomycetota</taxon>
        <taxon>Actinomycetes</taxon>
        <taxon>Kitasatosporales</taxon>
        <taxon>Streptomycetaceae</taxon>
        <taxon>Streptomyces</taxon>
    </lineage>
</organism>
<proteinExistence type="inferred from homology"/>
<accession>Q827U8</accession>
<gene>
    <name evidence="1" type="primary">thrS</name>
    <name type="ordered locus">SAV_6822</name>
</gene>
<keyword id="KW-0030">Aminoacyl-tRNA synthetase</keyword>
<keyword id="KW-0067">ATP-binding</keyword>
<keyword id="KW-0963">Cytoplasm</keyword>
<keyword id="KW-0436">Ligase</keyword>
<keyword id="KW-0479">Metal-binding</keyword>
<keyword id="KW-0547">Nucleotide-binding</keyword>
<keyword id="KW-0648">Protein biosynthesis</keyword>
<keyword id="KW-1185">Reference proteome</keyword>
<keyword id="KW-0694">RNA-binding</keyword>
<keyword id="KW-0820">tRNA-binding</keyword>
<keyword id="KW-0862">Zinc</keyword>
<name>SYT_STRAW</name>
<evidence type="ECO:0000255" key="1">
    <source>
        <dbReference type="HAMAP-Rule" id="MF_00184"/>
    </source>
</evidence>
<evidence type="ECO:0000255" key="2">
    <source>
        <dbReference type="PROSITE-ProRule" id="PRU01228"/>
    </source>
</evidence>
<sequence>MSDVRVIIQRDSEREERVVTTGTTAADLFPGERTVVAARVGGELKDLAYEVKDGEEVEPVQISSEDGLNILRHSTAHVMAQAVQELFPEAKLGIGPPVKDGFYYDFDVAKPFTPEDLKAIEKKMQEIQKRGQRFSRRVVTDEAAREELADEPYKLELIGIKGSASNDDGANVEVGSGELTIYDNLDAKTGDLCWKDLCRGPHLPTTRNIPAFKLMRNAAAYWRGSEKNPMLQRIYGTAWPSKDELKAHLDFLAEAEKRDHRKLGNELDLFSIPDQIGSGLAVFHPKGGIVRRVMEDYSRRRHEEEGYEFVYTPHATKGKLFETSGHLDWYADGMYPPMQLDEGVDYYLKPMNCPMHNLIFDARGRSYRELPLRLFEFGTVYRYEKSGVVHGLTRARGFTQDDAHIYCTREKMADELDKTLTFVLNLLRDYGLTDFYLELSTKDPEKFVGSDEVWEEATETLRQVAEKQGLPLVPDPGGAAFYGPKISVQAKDAIGRTWQMSTVQLDFNLPERFDLEYTGPDGSKQRPVMIHRALFGSIERFFAVLLEHYAGAFPAWLAPVQAVGIPIGDAHVEYLQKFAAEAKKKGLRVEVDSSSDRMQKKIRNAQKQKVPFMVIAGDEDMTAGAVSFRYRDGSQENGIPLDEAIAKIAKVVEERTQV</sequence>
<reference key="1">
    <citation type="journal article" date="2001" name="Proc. Natl. Acad. Sci. U.S.A.">
        <title>Genome sequence of an industrial microorganism Streptomyces avermitilis: deducing the ability of producing secondary metabolites.</title>
        <authorList>
            <person name="Omura S."/>
            <person name="Ikeda H."/>
            <person name="Ishikawa J."/>
            <person name="Hanamoto A."/>
            <person name="Takahashi C."/>
            <person name="Shinose M."/>
            <person name="Takahashi Y."/>
            <person name="Horikawa H."/>
            <person name="Nakazawa H."/>
            <person name="Osonoe T."/>
            <person name="Kikuchi H."/>
            <person name="Shiba T."/>
            <person name="Sakaki Y."/>
            <person name="Hattori M."/>
        </authorList>
    </citation>
    <scope>NUCLEOTIDE SEQUENCE [LARGE SCALE GENOMIC DNA]</scope>
    <source>
        <strain>ATCC 31267 / DSM 46492 / JCM 5070 / NBRC 14893 / NCIMB 12804 / NRRL 8165 / MA-4680</strain>
    </source>
</reference>
<reference key="2">
    <citation type="journal article" date="2003" name="Nat. Biotechnol.">
        <title>Complete genome sequence and comparative analysis of the industrial microorganism Streptomyces avermitilis.</title>
        <authorList>
            <person name="Ikeda H."/>
            <person name="Ishikawa J."/>
            <person name="Hanamoto A."/>
            <person name="Shinose M."/>
            <person name="Kikuchi H."/>
            <person name="Shiba T."/>
            <person name="Sakaki Y."/>
            <person name="Hattori M."/>
            <person name="Omura S."/>
        </authorList>
    </citation>
    <scope>NUCLEOTIDE SEQUENCE [LARGE SCALE GENOMIC DNA]</scope>
    <source>
        <strain>ATCC 31267 / DSM 46492 / JCM 5070 / NBRC 14893 / NCIMB 12804 / NRRL 8165 / MA-4680</strain>
    </source>
</reference>